<accession>Q0C3T7</accession>
<organism>
    <name type="scientific">Hyphomonas neptunium (strain ATCC 15444)</name>
    <dbReference type="NCBI Taxonomy" id="228405"/>
    <lineage>
        <taxon>Bacteria</taxon>
        <taxon>Pseudomonadati</taxon>
        <taxon>Pseudomonadota</taxon>
        <taxon>Alphaproteobacteria</taxon>
        <taxon>Hyphomonadales</taxon>
        <taxon>Hyphomonadaceae</taxon>
        <taxon>Hyphomonas</taxon>
    </lineage>
</organism>
<feature type="chain" id="PRO_1000193383" description="DNA repair protein RecO">
    <location>
        <begin position="1"/>
        <end position="243"/>
    </location>
</feature>
<proteinExistence type="inferred from homology"/>
<gene>
    <name evidence="1" type="primary">recO</name>
    <name type="ordered locus">HNE_0879</name>
</gene>
<keyword id="KW-0227">DNA damage</keyword>
<keyword id="KW-0233">DNA recombination</keyword>
<keyword id="KW-0234">DNA repair</keyword>
<keyword id="KW-1185">Reference proteome</keyword>
<sequence>MNWSDDGIVLGGRRFGEGGLILDVLTREKGRRSGLVYGGASRRKRAQFEAGNTIALSWTGRLDDQLGRFDVAEARKDRASRLLDDPAALAALSAITSLLRGGLNEGDAAGSSLYEATTLLLDQLTEPNVWPALYVRWELGLLSALGFGLDLDECAVSGANDGLTHVSPRTGRAVRGSEAEPYVDRLFALPSFLIDPRADVLPGDIAAGLRLTGYFIEGRLFGSVHRGLPPERERLLKRITPPA</sequence>
<comment type="function">
    <text evidence="1">Involved in DNA repair and RecF pathway recombination.</text>
</comment>
<comment type="similarity">
    <text evidence="1">Belongs to the RecO family.</text>
</comment>
<name>RECO_HYPNA</name>
<evidence type="ECO:0000255" key="1">
    <source>
        <dbReference type="HAMAP-Rule" id="MF_00201"/>
    </source>
</evidence>
<reference key="1">
    <citation type="journal article" date="2006" name="J. Bacteriol.">
        <title>Comparative genomic evidence for a close relationship between the dimorphic prosthecate bacteria Hyphomonas neptunium and Caulobacter crescentus.</title>
        <authorList>
            <person name="Badger J.H."/>
            <person name="Hoover T.R."/>
            <person name="Brun Y.V."/>
            <person name="Weiner R.M."/>
            <person name="Laub M.T."/>
            <person name="Alexandre G."/>
            <person name="Mrazek J."/>
            <person name="Ren Q."/>
            <person name="Paulsen I.T."/>
            <person name="Nelson K.E."/>
            <person name="Khouri H.M."/>
            <person name="Radune D."/>
            <person name="Sosa J."/>
            <person name="Dodson R.J."/>
            <person name="Sullivan S.A."/>
            <person name="Rosovitz M.J."/>
            <person name="Madupu R."/>
            <person name="Brinkac L.M."/>
            <person name="Durkin A.S."/>
            <person name="Daugherty S.C."/>
            <person name="Kothari S.P."/>
            <person name="Giglio M.G."/>
            <person name="Zhou L."/>
            <person name="Haft D.H."/>
            <person name="Selengut J.D."/>
            <person name="Davidsen T.M."/>
            <person name="Yang Q."/>
            <person name="Zafar N."/>
            <person name="Ward N.L."/>
        </authorList>
    </citation>
    <scope>NUCLEOTIDE SEQUENCE [LARGE SCALE GENOMIC DNA]</scope>
    <source>
        <strain>ATCC 15444</strain>
    </source>
</reference>
<dbReference type="EMBL" id="CP000158">
    <property type="protein sequence ID" value="ABI77557.1"/>
    <property type="molecule type" value="Genomic_DNA"/>
</dbReference>
<dbReference type="RefSeq" id="WP_011645906.1">
    <property type="nucleotide sequence ID" value="NC_008358.1"/>
</dbReference>
<dbReference type="SMR" id="Q0C3T7"/>
<dbReference type="STRING" id="228405.HNE_0879"/>
<dbReference type="KEGG" id="hne:HNE_0879"/>
<dbReference type="eggNOG" id="COG1381">
    <property type="taxonomic scope" value="Bacteria"/>
</dbReference>
<dbReference type="HOGENOM" id="CLU_086029_0_0_5"/>
<dbReference type="Proteomes" id="UP000001959">
    <property type="component" value="Chromosome"/>
</dbReference>
<dbReference type="GO" id="GO:0043590">
    <property type="term" value="C:bacterial nucleoid"/>
    <property type="evidence" value="ECO:0007669"/>
    <property type="project" value="TreeGrafter"/>
</dbReference>
<dbReference type="GO" id="GO:0006310">
    <property type="term" value="P:DNA recombination"/>
    <property type="evidence" value="ECO:0007669"/>
    <property type="project" value="UniProtKB-UniRule"/>
</dbReference>
<dbReference type="GO" id="GO:0006302">
    <property type="term" value="P:double-strand break repair"/>
    <property type="evidence" value="ECO:0007669"/>
    <property type="project" value="TreeGrafter"/>
</dbReference>
<dbReference type="Gene3D" id="2.40.50.140">
    <property type="entry name" value="Nucleic acid-binding proteins"/>
    <property type="match status" value="1"/>
</dbReference>
<dbReference type="Gene3D" id="1.20.1440.120">
    <property type="entry name" value="Recombination protein O, C-terminal domain"/>
    <property type="match status" value="1"/>
</dbReference>
<dbReference type="HAMAP" id="MF_00201">
    <property type="entry name" value="RecO"/>
    <property type="match status" value="1"/>
</dbReference>
<dbReference type="InterPro" id="IPR037278">
    <property type="entry name" value="ARFGAP/RecO"/>
</dbReference>
<dbReference type="InterPro" id="IPR022572">
    <property type="entry name" value="DNA_rep/recomb_RecO_N"/>
</dbReference>
<dbReference type="InterPro" id="IPR012340">
    <property type="entry name" value="NA-bd_OB-fold"/>
</dbReference>
<dbReference type="InterPro" id="IPR003717">
    <property type="entry name" value="RecO"/>
</dbReference>
<dbReference type="InterPro" id="IPR042242">
    <property type="entry name" value="RecO_C"/>
</dbReference>
<dbReference type="NCBIfam" id="TIGR00613">
    <property type="entry name" value="reco"/>
    <property type="match status" value="1"/>
</dbReference>
<dbReference type="PANTHER" id="PTHR33991">
    <property type="entry name" value="DNA REPAIR PROTEIN RECO"/>
    <property type="match status" value="1"/>
</dbReference>
<dbReference type="PANTHER" id="PTHR33991:SF1">
    <property type="entry name" value="DNA REPAIR PROTEIN RECO"/>
    <property type="match status" value="1"/>
</dbReference>
<dbReference type="Pfam" id="PF02565">
    <property type="entry name" value="RecO_C"/>
    <property type="match status" value="1"/>
</dbReference>
<dbReference type="Pfam" id="PF11967">
    <property type="entry name" value="RecO_N"/>
    <property type="match status" value="1"/>
</dbReference>
<dbReference type="SUPFAM" id="SSF57863">
    <property type="entry name" value="ArfGap/RecO-like zinc finger"/>
    <property type="match status" value="1"/>
</dbReference>
<dbReference type="SUPFAM" id="SSF50249">
    <property type="entry name" value="Nucleic acid-binding proteins"/>
    <property type="match status" value="1"/>
</dbReference>
<protein>
    <recommendedName>
        <fullName evidence="1">DNA repair protein RecO</fullName>
    </recommendedName>
    <alternativeName>
        <fullName evidence="1">Recombination protein O</fullName>
    </alternativeName>
</protein>